<gene>
    <name type="primary">GAD1</name>
    <name type="synonym">GAD67</name>
</gene>
<evidence type="ECO:0000250" key="1">
    <source>
        <dbReference type="UniProtKB" id="P48318"/>
    </source>
</evidence>
<evidence type="ECO:0000250" key="2">
    <source>
        <dbReference type="UniProtKB" id="Q99259"/>
    </source>
</evidence>
<evidence type="ECO:0000256" key="3">
    <source>
        <dbReference type="SAM" id="MobiDB-lite"/>
    </source>
</evidence>
<evidence type="ECO:0000305" key="4"/>
<protein>
    <recommendedName>
        <fullName>Glutamate decarboxylase 1</fullName>
        <ecNumber evidence="2">4.1.1.15</ecNumber>
    </recommendedName>
    <alternativeName>
        <fullName>67 kDa glutamic acid decarboxylase</fullName>
        <shortName>GAD-67</shortName>
    </alternativeName>
    <alternativeName>
        <fullName>Glutamate decarboxylase 67 kDa isoform</fullName>
    </alternativeName>
</protein>
<accession>Q5IS68</accession>
<comment type="function">
    <text evidence="2">Catalyzes the synthesis of the inhibitory neurotransmitter gamma-aminobutyric acid (GABA) with pyridoxal 5'-phosphate as cofactor.</text>
</comment>
<comment type="catalytic activity">
    <reaction evidence="2">
        <text>L-glutamate + H(+) = 4-aminobutanoate + CO2</text>
        <dbReference type="Rhea" id="RHEA:17785"/>
        <dbReference type="ChEBI" id="CHEBI:15378"/>
        <dbReference type="ChEBI" id="CHEBI:16526"/>
        <dbReference type="ChEBI" id="CHEBI:29985"/>
        <dbReference type="ChEBI" id="CHEBI:59888"/>
        <dbReference type="EC" id="4.1.1.15"/>
    </reaction>
    <physiologicalReaction direction="left-to-right" evidence="2">
        <dbReference type="Rhea" id="RHEA:17786"/>
    </physiologicalReaction>
</comment>
<comment type="cofactor">
    <cofactor evidence="2">
        <name>pyridoxal 5'-phosphate</name>
        <dbReference type="ChEBI" id="CHEBI:597326"/>
    </cofactor>
</comment>
<comment type="subunit">
    <text evidence="2">Homodimer.</text>
</comment>
<comment type="similarity">
    <text evidence="4">Belongs to the group II decarboxylase family.</text>
</comment>
<proteinExistence type="evidence at transcript level"/>
<organism>
    <name type="scientific">Pan troglodytes</name>
    <name type="common">Chimpanzee</name>
    <dbReference type="NCBI Taxonomy" id="9598"/>
    <lineage>
        <taxon>Eukaryota</taxon>
        <taxon>Metazoa</taxon>
        <taxon>Chordata</taxon>
        <taxon>Craniata</taxon>
        <taxon>Vertebrata</taxon>
        <taxon>Euteleostomi</taxon>
        <taxon>Mammalia</taxon>
        <taxon>Eutheria</taxon>
        <taxon>Euarchontoglires</taxon>
        <taxon>Primates</taxon>
        <taxon>Haplorrhini</taxon>
        <taxon>Catarrhini</taxon>
        <taxon>Hominidae</taxon>
        <taxon>Pan</taxon>
    </lineage>
</organism>
<feature type="chain" id="PRO_0000146965" description="Glutamate decarboxylase 1">
    <location>
        <begin position="1"/>
        <end position="594"/>
    </location>
</feature>
<feature type="region of interest" description="Disordered" evidence="3">
    <location>
        <begin position="1"/>
        <end position="23"/>
    </location>
</feature>
<feature type="compositionally biased region" description="Low complexity" evidence="3">
    <location>
        <begin position="1"/>
        <end position="13"/>
    </location>
</feature>
<feature type="binding site" evidence="2">
    <location>
        <begin position="190"/>
        <end position="192"/>
    </location>
    <ligand>
        <name>4-aminobutanoate</name>
        <dbReference type="ChEBI" id="CHEBI:59888"/>
    </ligand>
</feature>
<feature type="binding site" evidence="2">
    <location>
        <position position="567"/>
    </location>
    <ligand>
        <name>4-aminobutanoate</name>
        <dbReference type="ChEBI" id="CHEBI:59888"/>
    </ligand>
</feature>
<feature type="modified residue" description="Phosphoserine" evidence="1">
    <location>
        <position position="78"/>
    </location>
</feature>
<feature type="modified residue" description="N6-(pyridoxal phosphate)lysine" evidence="2">
    <location>
        <position position="405"/>
    </location>
</feature>
<name>DCE1_PANTR</name>
<dbReference type="EC" id="4.1.1.15" evidence="2"/>
<dbReference type="EMBL" id="AY665260">
    <property type="protein sequence ID" value="AAV74298.1"/>
    <property type="molecule type" value="mRNA"/>
</dbReference>
<dbReference type="RefSeq" id="NP_001029285.1">
    <property type="nucleotide sequence ID" value="NM_001034113.1"/>
</dbReference>
<dbReference type="RefSeq" id="XP_009441979.1">
    <property type="nucleotide sequence ID" value="XM_009443704.3"/>
</dbReference>
<dbReference type="RefSeq" id="XP_016804843.1">
    <property type="nucleotide sequence ID" value="XM_016949354.1"/>
</dbReference>
<dbReference type="SMR" id="Q5IS68"/>
<dbReference type="FunCoup" id="Q5IS68">
    <property type="interactions" value="653"/>
</dbReference>
<dbReference type="STRING" id="9598.ENSPTRP00000021575"/>
<dbReference type="PaxDb" id="9598-ENSPTRP00000021575"/>
<dbReference type="Ensembl" id="ENSPTRT00000023393.6">
    <property type="protein sequence ID" value="ENSPTRP00000021575.5"/>
    <property type="gene ID" value="ENSPTRG00000012626.7"/>
</dbReference>
<dbReference type="GeneID" id="468557"/>
<dbReference type="KEGG" id="ptr:468557"/>
<dbReference type="CTD" id="2571"/>
<dbReference type="VGNC" id="VGNC:436">
    <property type="gene designation" value="GAD1"/>
</dbReference>
<dbReference type="eggNOG" id="KOG0629">
    <property type="taxonomic scope" value="Eukaryota"/>
</dbReference>
<dbReference type="GeneTree" id="ENSGT00940000155526"/>
<dbReference type="HOGENOM" id="CLU_011856_0_0_1"/>
<dbReference type="InParanoid" id="Q5IS68"/>
<dbReference type="OMA" id="RHATYHA"/>
<dbReference type="OrthoDB" id="1419at9604"/>
<dbReference type="TreeFam" id="TF314688"/>
<dbReference type="Proteomes" id="UP000002277">
    <property type="component" value="Chromosome 2B"/>
</dbReference>
<dbReference type="Bgee" id="ENSPTRG00000012626">
    <property type="expression patterns" value="Expressed in Brodmann (1909) area 10 and 11 other cell types or tissues"/>
</dbReference>
<dbReference type="GO" id="GO:0043679">
    <property type="term" value="C:axon terminus"/>
    <property type="evidence" value="ECO:0007669"/>
    <property type="project" value="Ensembl"/>
</dbReference>
<dbReference type="GO" id="GO:0005938">
    <property type="term" value="C:cell cortex"/>
    <property type="evidence" value="ECO:0007669"/>
    <property type="project" value="Ensembl"/>
</dbReference>
<dbReference type="GO" id="GO:0005737">
    <property type="term" value="C:cytoplasm"/>
    <property type="evidence" value="ECO:0000318"/>
    <property type="project" value="GO_Central"/>
</dbReference>
<dbReference type="GO" id="GO:0098982">
    <property type="term" value="C:GABA-ergic synapse"/>
    <property type="evidence" value="ECO:0007669"/>
    <property type="project" value="Ensembl"/>
</dbReference>
<dbReference type="GO" id="GO:0060077">
    <property type="term" value="C:inhibitory synapse"/>
    <property type="evidence" value="ECO:0007669"/>
    <property type="project" value="Ensembl"/>
</dbReference>
<dbReference type="GO" id="GO:0048471">
    <property type="term" value="C:perinuclear region of cytoplasm"/>
    <property type="evidence" value="ECO:0007669"/>
    <property type="project" value="Ensembl"/>
</dbReference>
<dbReference type="GO" id="GO:0048786">
    <property type="term" value="C:presynaptic active zone"/>
    <property type="evidence" value="ECO:0000318"/>
    <property type="project" value="GO_Central"/>
</dbReference>
<dbReference type="GO" id="GO:0004351">
    <property type="term" value="F:glutamate decarboxylase activity"/>
    <property type="evidence" value="ECO:0000250"/>
    <property type="project" value="UniProtKB"/>
</dbReference>
<dbReference type="GO" id="GO:0042802">
    <property type="term" value="F:identical protein binding"/>
    <property type="evidence" value="ECO:0000250"/>
    <property type="project" value="UniProtKB"/>
</dbReference>
<dbReference type="GO" id="GO:0030170">
    <property type="term" value="F:pyridoxal phosphate binding"/>
    <property type="evidence" value="ECO:0007669"/>
    <property type="project" value="InterPro"/>
</dbReference>
<dbReference type="GO" id="GO:0009449">
    <property type="term" value="P:gamma-aminobutyric acid biosynthetic process"/>
    <property type="evidence" value="ECO:0000250"/>
    <property type="project" value="UniProtKB"/>
</dbReference>
<dbReference type="GO" id="GO:0006538">
    <property type="term" value="P:glutamate catabolic process"/>
    <property type="evidence" value="ECO:0000250"/>
    <property type="project" value="UniProtKB"/>
</dbReference>
<dbReference type="GO" id="GO:0035641">
    <property type="term" value="P:locomotory exploration behavior"/>
    <property type="evidence" value="ECO:0007669"/>
    <property type="project" value="Ensembl"/>
</dbReference>
<dbReference type="GO" id="GO:0035176">
    <property type="term" value="P:social behavior"/>
    <property type="evidence" value="ECO:0007669"/>
    <property type="project" value="Ensembl"/>
</dbReference>
<dbReference type="CDD" id="cd06450">
    <property type="entry name" value="DOPA_deC_like"/>
    <property type="match status" value="1"/>
</dbReference>
<dbReference type="FunFam" id="3.90.1150.170:FF:000003">
    <property type="entry name" value="Glutamate decarboxylase 1"/>
    <property type="match status" value="1"/>
</dbReference>
<dbReference type="FunFam" id="3.40.640.10:FF:000016">
    <property type="entry name" value="Glutamate decarboxylase like 1"/>
    <property type="match status" value="1"/>
</dbReference>
<dbReference type="Gene3D" id="3.90.1150.170">
    <property type="match status" value="1"/>
</dbReference>
<dbReference type="Gene3D" id="3.40.640.10">
    <property type="entry name" value="Type I PLP-dependent aspartate aminotransferase-like (Major domain)"/>
    <property type="match status" value="1"/>
</dbReference>
<dbReference type="InterPro" id="IPR002129">
    <property type="entry name" value="PyrdxlP-dep_de-COase"/>
</dbReference>
<dbReference type="InterPro" id="IPR015424">
    <property type="entry name" value="PyrdxlP-dep_Trfase"/>
</dbReference>
<dbReference type="InterPro" id="IPR015421">
    <property type="entry name" value="PyrdxlP-dep_Trfase_major"/>
</dbReference>
<dbReference type="InterPro" id="IPR021115">
    <property type="entry name" value="Pyridoxal-P_BS"/>
</dbReference>
<dbReference type="PANTHER" id="PTHR45677:SF5">
    <property type="entry name" value="GLUTAMATE DECARBOXYLASE 1"/>
    <property type="match status" value="1"/>
</dbReference>
<dbReference type="PANTHER" id="PTHR45677">
    <property type="entry name" value="GLUTAMATE DECARBOXYLASE-RELATED"/>
    <property type="match status" value="1"/>
</dbReference>
<dbReference type="Pfam" id="PF00282">
    <property type="entry name" value="Pyridoxal_deC"/>
    <property type="match status" value="1"/>
</dbReference>
<dbReference type="SUPFAM" id="SSF53383">
    <property type="entry name" value="PLP-dependent transferases"/>
    <property type="match status" value="1"/>
</dbReference>
<dbReference type="PROSITE" id="PS00392">
    <property type="entry name" value="DDC_GAD_HDC_YDC"/>
    <property type="match status" value="1"/>
</dbReference>
<sequence length="594" mass="66898">MASSTPSSSATSSNAGADPNTTNLRPTTYDTWCGVAHGCTRKLGLKICGFLQRTNSLEEKSRLVSAFKERQSSKNLLSCENSDRDARFRRTETDFSNLFARDLLPAKNGEEQTVQFLLEVVDILLNYVRKTFDRSTKVLDFHHPHQLLEGMEGFNLELSDHPESLEQILVDCRDTLKYGVRTGHPRFFNQLSTGLDIIGLAGEWLTSTANTNMFTYEIAPVFVLMEQITLKKMREIIGWSSKDGDGIFSPGGAISNMYSIMAARYKYFPEVKTKGMAAVPKLVLFTSEQSHYSIKKAGAALGFGTDNVILIKCNERGKIIPADFEAKILEAKQKGYVPFYVNATAGTTVYGAFDPIQEIADICEKYNLWLHVDAAWGGGLLMSRKHRHKLNGIERANSVTWNPHKMMGVLLQCSAILIKEKGILQGCNQMCAGYLFQPDKQYDVSYDTGDKAIQCGRHVDIFKFWLMWKAKGTVGFESQINKCLELAEYLYAKIKNREEFEMVFNGEPEHTNVCFWYIPQSLRGVPDSPQRREKLHKVAPKIKALMMESGTTMVGYQPQGDKANFFRMVISNPAATQSDIDFLIEEIERLGQDL</sequence>
<keyword id="KW-0210">Decarboxylase</keyword>
<keyword id="KW-0456">Lyase</keyword>
<keyword id="KW-0530">Neurotransmitter biosynthesis</keyword>
<keyword id="KW-0597">Phosphoprotein</keyword>
<keyword id="KW-0663">Pyridoxal phosphate</keyword>
<keyword id="KW-1185">Reference proteome</keyword>
<reference key="1">
    <citation type="journal article" date="2004" name="Cell">
        <title>Accelerated evolution of nervous system genes in the origin of Homo sapiens.</title>
        <authorList>
            <person name="Dorus S."/>
            <person name="Vallender E.J."/>
            <person name="Evans P.D."/>
            <person name="Anderson J.R."/>
            <person name="Gilbert S.L."/>
            <person name="Mahowald M."/>
            <person name="Wyckoff G.J."/>
            <person name="Malcom C.M."/>
            <person name="Lahn B.T."/>
        </authorList>
    </citation>
    <scope>NUCLEOTIDE SEQUENCE [MRNA]</scope>
</reference>